<reference key="1">
    <citation type="journal article" date="1987" name="Nucleic Acids Res.">
        <title>Nucleotide sequence for gene 6 of rotavirus strain S2.</title>
        <authorList>
            <person name="Hofer J.M.I."/>
            <person name="Sato F."/>
            <person name="Street J.E."/>
            <person name="Bellamy A.R."/>
        </authorList>
    </citation>
    <scope>NUCLEOTIDE SEQUENCE [MRNA]</scope>
</reference>
<reference key="2">
    <citation type="journal article" date="2008" name="J. Virol.">
        <title>Full genome-based classification of rotaviruses reveals a common origin between human Wa-Like and porcine rotavirus strains and human DS-1-like and bovine rotavirus strains.</title>
        <authorList>
            <person name="Matthijnssens J."/>
            <person name="Ciarlet M."/>
            <person name="Heiman E.M."/>
            <person name="Arijs I."/>
            <person name="Delbeke T."/>
            <person name="McDonald S.M."/>
            <person name="Palombo E.A."/>
            <person name="Iturriza-Gomara M."/>
            <person name="Maes P."/>
            <person name="Patton J.T."/>
            <person name="Rahman M."/>
            <person name="Van Ranst M."/>
        </authorList>
    </citation>
    <scope>NUCLEOTIDE SEQUENCE [GENOMIC RNA]</scope>
</reference>
<sequence length="397" mass="44906">MDVLYSLSKTLKDARDKIVEGTLYSNVSDLIQQFNQMIITMNGNEFQTGGIGNLPTRNWSFDFGLLGTTLLNLDANYVETARNTIDYFVDFVDNVCMDEMVRESQRNGIAPQSESLRKLSGIKFKRINFDNSSEYIENWNLQNRRQRTGFTFHKPNIFPYSASFTLNRSQPAHDNLMGTMWLNAGSEIHVAGFDYSCAINAPANIQQFEHIVQLRRVLTTATITLLPDAERFSFPRVINSADGATTWYFNPVILRPNNVEVEFLLNGQIINTYQARFGTIVARNFDTIRLSFQLMRPPNMTPSVAALFPNAQPFEHHATVGLTLRIESAICESVLADASETMLANVTSVRQEYAIPVGPVFPPGMNWTDLITNYSPSREDNLHRVFTVASIRSMLVK</sequence>
<keyword id="KW-0106">Calcium</keyword>
<keyword id="KW-0167">Capsid protein</keyword>
<keyword id="KW-1154">Intermediate capsid protein</keyword>
<keyword id="KW-0479">Metal-binding</keyword>
<keyword id="KW-0832">Ubl conjugation</keyword>
<keyword id="KW-0946">Virion</keyword>
<keyword id="KW-0862">Zinc</keyword>
<feature type="chain" id="PRO_0000149572" description="Intermediate capsid protein VP6">
    <location>
        <begin position="1"/>
        <end position="397"/>
    </location>
</feature>
<feature type="region of interest" description="Interaction with the inner capsid protein VP2" evidence="1">
    <location>
        <begin position="62"/>
        <end position="73"/>
    </location>
</feature>
<feature type="binding site" evidence="1">
    <location>
        <position position="153"/>
    </location>
    <ligand>
        <name>Zn(2+)</name>
        <dbReference type="ChEBI" id="CHEBI:29105"/>
        <note>ligand shared between all trimeric partners</note>
    </ligand>
</feature>
<feature type="binding site" evidence="1">
    <location>
        <position position="266"/>
    </location>
    <ligand>
        <name>Ca(2+)</name>
        <dbReference type="ChEBI" id="CHEBI:29108"/>
    </ligand>
</feature>
<feature type="binding site" evidence="1">
    <location>
        <position position="286"/>
    </location>
    <ligand>
        <name>Ca(2+)</name>
        <dbReference type="ChEBI" id="CHEBI:29108"/>
    </ligand>
</feature>
<feature type="sequence conflict" description="In Ref. 2; ABI60847." evidence="2" ref="2">
    <original>H</original>
    <variation>Q</variation>
    <location>
        <position position="189"/>
    </location>
</feature>
<feature type="sequence conflict" description="In Ref. 2; ABI60847." evidence="2" ref="2">
    <original>H</original>
    <variation>Q</variation>
    <location>
        <position position="383"/>
    </location>
</feature>
<accession>P08035</accession>
<accession>A7J393</accession>
<protein>
    <recommendedName>
        <fullName evidence="1">Intermediate capsid protein VP6</fullName>
    </recommendedName>
</protein>
<evidence type="ECO:0000255" key="1">
    <source>
        <dbReference type="HAMAP-Rule" id="MF_04129"/>
    </source>
</evidence>
<evidence type="ECO:0000305" key="2"/>
<comment type="function">
    <text evidence="1">Intermediate capsid protein that self assembles to form an icosahedral capsid with a T=13 symmetry, which consists of 230 trimers of VP6, with channels at each of its five-fold vertices. This capsid constitutes the middle concentric layer of the viral mature particle. The innermost VP2 capsid and the intermediate VP6 capsid remain intact following cell entry to protect the dsRNA from degradation and to prevent unfavorable antiviral responses in the host cell during all the replication cycle of the virus. Nascent transcripts are transcribed within the structural confines of this double-layered particle (DLP) and are extruded through the channels at the five-fold axes. VP6 is required for the transcription activity of the DLP.</text>
</comment>
<comment type="subunit">
    <text evidence="1">Homotrimer. Interacts with the inner capsid protein VP2. Interacts with the outer capsid glycoprotein VP7. Interacts with the outer capsid protein VP5*.</text>
</comment>
<comment type="subcellular location">
    <subcellularLocation>
        <location evidence="1">Virion</location>
    </subcellularLocation>
    <text evidence="1">Component of the intermediate capsid. Also found in spherical cytoplasmic structures, called virus factories, that appear early after infection and are the site of viral replication and packaging.</text>
</comment>
<comment type="PTM">
    <text evidence="1">The N-terminus is blocked.</text>
</comment>
<comment type="PTM">
    <text evidence="1">Sumoylated with SUMO1 and SUMO2. Sumoylation of viral proteins seems to have a positive role on viral replication.</text>
</comment>
<comment type="miscellaneous">
    <text evidence="1">The VP6 trimer contains a zinc ion located at the center of the molecule. The zinc ion is not essential for either trimerization or transcription activity of the DLP. Zinc-depleted VP6 has an increased sensitivity to proteases.</text>
</comment>
<comment type="similarity">
    <text evidence="1">Belongs to the rotavirus VP6 family.</text>
</comment>
<proteinExistence type="evidence at transcript level"/>
<organismHost>
    <name type="scientific">Homo sapiens</name>
    <name type="common">Human</name>
    <dbReference type="NCBI Taxonomy" id="9606"/>
</organismHost>
<dbReference type="EMBL" id="Y00437">
    <property type="protein sequence ID" value="CAA68495.1"/>
    <property type="molecule type" value="mRNA"/>
</dbReference>
<dbReference type="EMBL" id="DQ870488">
    <property type="protein sequence ID" value="ABI60847.1"/>
    <property type="molecule type" value="Genomic_RNA"/>
</dbReference>
<dbReference type="PIR" id="A26849">
    <property type="entry name" value="VPXRS2"/>
</dbReference>
<dbReference type="SMR" id="P08035"/>
<dbReference type="GO" id="GO:0019031">
    <property type="term" value="C:viral envelope"/>
    <property type="evidence" value="ECO:0007669"/>
    <property type="project" value="UniProtKB-UniRule"/>
</dbReference>
<dbReference type="GO" id="GO:0039626">
    <property type="term" value="C:viral intermediate capsid"/>
    <property type="evidence" value="ECO:0007669"/>
    <property type="project" value="UniProtKB-UniRule"/>
</dbReference>
<dbReference type="GO" id="GO:0046789">
    <property type="term" value="F:host cell surface receptor binding"/>
    <property type="evidence" value="ECO:0007669"/>
    <property type="project" value="UniProtKB-UniRule"/>
</dbReference>
<dbReference type="GO" id="GO:0046872">
    <property type="term" value="F:metal ion binding"/>
    <property type="evidence" value="ECO:0007669"/>
    <property type="project" value="UniProtKB-UniRule"/>
</dbReference>
<dbReference type="GO" id="GO:0005198">
    <property type="term" value="F:structural molecule activity"/>
    <property type="evidence" value="ECO:0007669"/>
    <property type="project" value="UniProtKB-UniRule"/>
</dbReference>
<dbReference type="GO" id="GO:0019064">
    <property type="term" value="P:fusion of virus membrane with host plasma membrane"/>
    <property type="evidence" value="ECO:0007669"/>
    <property type="project" value="UniProtKB-UniRule"/>
</dbReference>
<dbReference type="FunFam" id="2.60.120.170:FF:000001">
    <property type="entry name" value="Intermediate capsid protein VP6"/>
    <property type="match status" value="1"/>
</dbReference>
<dbReference type="Gene3D" id="2.60.120.170">
    <property type="match status" value="1"/>
</dbReference>
<dbReference type="Gene3D" id="1.10.1350.10">
    <property type="entry name" value="Viral capsid alpha domain"/>
    <property type="match status" value="1"/>
</dbReference>
<dbReference type="HAMAP" id="MF_04126">
    <property type="entry name" value="Rota_VP6"/>
    <property type="match status" value="1"/>
</dbReference>
<dbReference type="HAMAP" id="MF_04129">
    <property type="entry name" value="Rota_VP6_A"/>
    <property type="match status" value="1"/>
</dbReference>
<dbReference type="InterPro" id="IPR008980">
    <property type="entry name" value="Capsid_hemagglutn"/>
</dbReference>
<dbReference type="InterPro" id="IPR001385">
    <property type="entry name" value="Rotavirus_A/C_VP6"/>
</dbReference>
<dbReference type="InterPro" id="IPR008935">
    <property type="entry name" value="Virus_capsid_a-hlx_vir"/>
</dbReference>
<dbReference type="Pfam" id="PF00980">
    <property type="entry name" value="Rota_Capsid_VP6"/>
    <property type="match status" value="1"/>
</dbReference>
<dbReference type="SUPFAM" id="SSF48345">
    <property type="entry name" value="A virus capsid protein alpha-helical domain"/>
    <property type="match status" value="1"/>
</dbReference>
<dbReference type="SUPFAM" id="SSF49818">
    <property type="entry name" value="Viral protein domain"/>
    <property type="match status" value="1"/>
</dbReference>
<organism>
    <name type="scientific">Rotavirus A (strain RVA/Human/Japan/S2/1980/G2P1B[4])</name>
    <name type="common">RV-A</name>
    <dbReference type="NCBI Taxonomy" id="10959"/>
    <lineage>
        <taxon>Viruses</taxon>
        <taxon>Riboviria</taxon>
        <taxon>Orthornavirae</taxon>
        <taxon>Duplornaviricota</taxon>
        <taxon>Resentoviricetes</taxon>
        <taxon>Reovirales</taxon>
        <taxon>Sedoreoviridae</taxon>
        <taxon>Rotavirus</taxon>
        <taxon>Rotavirus A</taxon>
    </lineage>
</organism>
<name>VP6_ROTHS</name>